<proteinExistence type="inferred from homology"/>
<name>RL36_RUEPO</name>
<organism>
    <name type="scientific">Ruegeria pomeroyi (strain ATCC 700808 / DSM 15171 / DSS-3)</name>
    <name type="common">Silicibacter pomeroyi</name>
    <dbReference type="NCBI Taxonomy" id="246200"/>
    <lineage>
        <taxon>Bacteria</taxon>
        <taxon>Pseudomonadati</taxon>
        <taxon>Pseudomonadota</taxon>
        <taxon>Alphaproteobacteria</taxon>
        <taxon>Rhodobacterales</taxon>
        <taxon>Roseobacteraceae</taxon>
        <taxon>Ruegeria</taxon>
    </lineage>
</organism>
<dbReference type="EMBL" id="CP000031">
    <property type="protein sequence ID" value="AAV97120.1"/>
    <property type="status" value="ALT_INIT"/>
    <property type="molecule type" value="Genomic_DNA"/>
</dbReference>
<dbReference type="SMR" id="Q5LNC8"/>
<dbReference type="STRING" id="246200.SPO3284"/>
<dbReference type="PaxDb" id="246200-SPO3284"/>
<dbReference type="KEGG" id="sil:SPO3284"/>
<dbReference type="eggNOG" id="COG0257">
    <property type="taxonomic scope" value="Bacteria"/>
</dbReference>
<dbReference type="HOGENOM" id="CLU_135723_3_0_5"/>
<dbReference type="OrthoDB" id="9801558at2"/>
<dbReference type="Proteomes" id="UP000001023">
    <property type="component" value="Chromosome"/>
</dbReference>
<dbReference type="GO" id="GO:1990904">
    <property type="term" value="C:ribonucleoprotein complex"/>
    <property type="evidence" value="ECO:0007669"/>
    <property type="project" value="UniProtKB-KW"/>
</dbReference>
<dbReference type="GO" id="GO:0005840">
    <property type="term" value="C:ribosome"/>
    <property type="evidence" value="ECO:0007669"/>
    <property type="project" value="UniProtKB-KW"/>
</dbReference>
<dbReference type="GO" id="GO:0003735">
    <property type="term" value="F:structural constituent of ribosome"/>
    <property type="evidence" value="ECO:0007669"/>
    <property type="project" value="InterPro"/>
</dbReference>
<dbReference type="GO" id="GO:0006412">
    <property type="term" value="P:translation"/>
    <property type="evidence" value="ECO:0007669"/>
    <property type="project" value="UniProtKB-UniRule"/>
</dbReference>
<dbReference type="HAMAP" id="MF_00251">
    <property type="entry name" value="Ribosomal_bL36"/>
    <property type="match status" value="1"/>
</dbReference>
<dbReference type="InterPro" id="IPR000473">
    <property type="entry name" value="Ribosomal_bL36"/>
</dbReference>
<dbReference type="InterPro" id="IPR035977">
    <property type="entry name" value="Ribosomal_bL36_sp"/>
</dbReference>
<dbReference type="InterPro" id="IPR047621">
    <property type="entry name" value="Ribosomal_L36_bact"/>
</dbReference>
<dbReference type="NCBIfam" id="NF002021">
    <property type="entry name" value="PRK00831.1"/>
    <property type="match status" value="1"/>
</dbReference>
<dbReference type="NCBIfam" id="TIGR01022">
    <property type="entry name" value="rpmJ_bact"/>
    <property type="match status" value="1"/>
</dbReference>
<dbReference type="PANTHER" id="PTHR47781">
    <property type="entry name" value="50S RIBOSOMAL PROTEIN L36 2"/>
    <property type="match status" value="1"/>
</dbReference>
<dbReference type="PANTHER" id="PTHR47781:SF1">
    <property type="entry name" value="LARGE RIBOSOMAL SUBUNIT PROTEIN BL36B"/>
    <property type="match status" value="1"/>
</dbReference>
<dbReference type="Pfam" id="PF00444">
    <property type="entry name" value="Ribosomal_L36"/>
    <property type="match status" value="1"/>
</dbReference>
<dbReference type="SUPFAM" id="SSF57840">
    <property type="entry name" value="Ribosomal protein L36"/>
    <property type="match status" value="1"/>
</dbReference>
<dbReference type="PROSITE" id="PS00828">
    <property type="entry name" value="RIBOSOMAL_L36"/>
    <property type="match status" value="1"/>
</dbReference>
<accession>Q5LNC8</accession>
<feature type="chain" id="PRO_0000344720" description="Large ribosomal subunit protein bL36">
    <location>
        <begin position="1"/>
        <end position="41"/>
    </location>
</feature>
<keyword id="KW-1185">Reference proteome</keyword>
<keyword id="KW-0687">Ribonucleoprotein</keyword>
<keyword id="KW-0689">Ribosomal protein</keyword>
<comment type="similarity">
    <text evidence="1">Belongs to the bacterial ribosomal protein bL36 family.</text>
</comment>
<comment type="sequence caution" evidence="2">
    <conflict type="erroneous initiation">
        <sequence resource="EMBL-CDS" id="AAV97120"/>
    </conflict>
</comment>
<reference key="1">
    <citation type="journal article" date="2004" name="Nature">
        <title>Genome sequence of Silicibacter pomeroyi reveals adaptations to the marine environment.</title>
        <authorList>
            <person name="Moran M.A."/>
            <person name="Buchan A."/>
            <person name="Gonzalez J.M."/>
            <person name="Heidelberg J.F."/>
            <person name="Whitman W.B."/>
            <person name="Kiene R.P."/>
            <person name="Henriksen J.R."/>
            <person name="King G.M."/>
            <person name="Belas R."/>
            <person name="Fuqua C."/>
            <person name="Brinkac L.M."/>
            <person name="Lewis M."/>
            <person name="Johri S."/>
            <person name="Weaver B."/>
            <person name="Pai G."/>
            <person name="Eisen J.A."/>
            <person name="Rahe E."/>
            <person name="Sheldon W.M."/>
            <person name="Ye W."/>
            <person name="Miller T.R."/>
            <person name="Carlton J."/>
            <person name="Rasko D.A."/>
            <person name="Paulsen I.T."/>
            <person name="Ren Q."/>
            <person name="Daugherty S.C."/>
            <person name="DeBoy R.T."/>
            <person name="Dodson R.J."/>
            <person name="Durkin A.S."/>
            <person name="Madupu R."/>
            <person name="Nelson W.C."/>
            <person name="Sullivan S.A."/>
            <person name="Rosovitz M.J."/>
            <person name="Haft D.H."/>
            <person name="Selengut J."/>
            <person name="Ward N."/>
        </authorList>
    </citation>
    <scope>NUCLEOTIDE SEQUENCE [LARGE SCALE GENOMIC DNA]</scope>
    <source>
        <strain>ATCC 700808 / DSM 15171 / DSS-3</strain>
    </source>
</reference>
<reference key="2">
    <citation type="journal article" date="2014" name="Stand. Genomic Sci.">
        <title>An updated genome annotation for the model marine bacterium Ruegeria pomeroyi DSS-3.</title>
        <authorList>
            <person name="Rivers A.R."/>
            <person name="Smith C.B."/>
            <person name="Moran M.A."/>
        </authorList>
    </citation>
    <scope>GENOME REANNOTATION</scope>
    <source>
        <strain>ATCC 700808 / DSM 15171 / DSS-3</strain>
    </source>
</reference>
<protein>
    <recommendedName>
        <fullName evidence="1">Large ribosomal subunit protein bL36</fullName>
    </recommendedName>
    <alternativeName>
        <fullName evidence="2">50S ribosomal protein L36</fullName>
    </alternativeName>
</protein>
<evidence type="ECO:0000255" key="1">
    <source>
        <dbReference type="HAMAP-Rule" id="MF_00251"/>
    </source>
</evidence>
<evidence type="ECO:0000305" key="2"/>
<gene>
    <name evidence="1" type="primary">rpmJ</name>
    <name type="ordered locus">SPO3284</name>
</gene>
<sequence>MKVRNSLRSLKSRHRDCRVVRRKGRVYVINKTQRKFKARQG</sequence>